<gene>
    <name evidence="1" type="primary">argH</name>
    <name type="ordered locus">Rmag_0784</name>
</gene>
<keyword id="KW-0028">Amino-acid biosynthesis</keyword>
<keyword id="KW-0055">Arginine biosynthesis</keyword>
<keyword id="KW-0963">Cytoplasm</keyword>
<keyword id="KW-0456">Lyase</keyword>
<dbReference type="EC" id="4.3.2.1" evidence="1"/>
<dbReference type="EMBL" id="CP000488">
    <property type="protein sequence ID" value="ABL02509.1"/>
    <property type="molecule type" value="Genomic_DNA"/>
</dbReference>
<dbReference type="RefSeq" id="WP_011738134.1">
    <property type="nucleotide sequence ID" value="NC_008610.1"/>
</dbReference>
<dbReference type="SMR" id="A1AX52"/>
<dbReference type="STRING" id="413404.Rmag_0784"/>
<dbReference type="KEGG" id="rma:Rmag_0784"/>
<dbReference type="eggNOG" id="COG0165">
    <property type="taxonomic scope" value="Bacteria"/>
</dbReference>
<dbReference type="HOGENOM" id="CLU_027272_2_3_6"/>
<dbReference type="UniPathway" id="UPA00068">
    <property type="reaction ID" value="UER00114"/>
</dbReference>
<dbReference type="Proteomes" id="UP000002587">
    <property type="component" value="Chromosome"/>
</dbReference>
<dbReference type="GO" id="GO:0005829">
    <property type="term" value="C:cytosol"/>
    <property type="evidence" value="ECO:0007669"/>
    <property type="project" value="TreeGrafter"/>
</dbReference>
<dbReference type="GO" id="GO:0004056">
    <property type="term" value="F:argininosuccinate lyase activity"/>
    <property type="evidence" value="ECO:0007669"/>
    <property type="project" value="UniProtKB-UniRule"/>
</dbReference>
<dbReference type="GO" id="GO:0042450">
    <property type="term" value="P:arginine biosynthetic process via ornithine"/>
    <property type="evidence" value="ECO:0007669"/>
    <property type="project" value="InterPro"/>
</dbReference>
<dbReference type="GO" id="GO:0006526">
    <property type="term" value="P:L-arginine biosynthetic process"/>
    <property type="evidence" value="ECO:0007669"/>
    <property type="project" value="UniProtKB-UniRule"/>
</dbReference>
<dbReference type="CDD" id="cd01359">
    <property type="entry name" value="Argininosuccinate_lyase"/>
    <property type="match status" value="1"/>
</dbReference>
<dbReference type="FunFam" id="1.10.275.10:FF:000002">
    <property type="entry name" value="Argininosuccinate lyase"/>
    <property type="match status" value="1"/>
</dbReference>
<dbReference type="FunFam" id="1.10.40.30:FF:000001">
    <property type="entry name" value="Argininosuccinate lyase"/>
    <property type="match status" value="1"/>
</dbReference>
<dbReference type="FunFam" id="1.20.200.10:FF:000002">
    <property type="entry name" value="Argininosuccinate lyase"/>
    <property type="match status" value="1"/>
</dbReference>
<dbReference type="Gene3D" id="1.10.40.30">
    <property type="entry name" value="Fumarase/aspartase (C-terminal domain)"/>
    <property type="match status" value="1"/>
</dbReference>
<dbReference type="Gene3D" id="1.20.200.10">
    <property type="entry name" value="Fumarase/aspartase (Central domain)"/>
    <property type="match status" value="1"/>
</dbReference>
<dbReference type="Gene3D" id="1.10.275.10">
    <property type="entry name" value="Fumarase/aspartase (N-terminal domain)"/>
    <property type="match status" value="1"/>
</dbReference>
<dbReference type="HAMAP" id="MF_00006">
    <property type="entry name" value="Arg_succ_lyase"/>
    <property type="match status" value="1"/>
</dbReference>
<dbReference type="InterPro" id="IPR029419">
    <property type="entry name" value="Arg_succ_lyase_C"/>
</dbReference>
<dbReference type="InterPro" id="IPR009049">
    <property type="entry name" value="Argininosuccinate_lyase"/>
</dbReference>
<dbReference type="InterPro" id="IPR024083">
    <property type="entry name" value="Fumarase/histidase_N"/>
</dbReference>
<dbReference type="InterPro" id="IPR020557">
    <property type="entry name" value="Fumarate_lyase_CS"/>
</dbReference>
<dbReference type="InterPro" id="IPR000362">
    <property type="entry name" value="Fumarate_lyase_fam"/>
</dbReference>
<dbReference type="InterPro" id="IPR022761">
    <property type="entry name" value="Fumarate_lyase_N"/>
</dbReference>
<dbReference type="InterPro" id="IPR008948">
    <property type="entry name" value="L-Aspartase-like"/>
</dbReference>
<dbReference type="NCBIfam" id="TIGR00838">
    <property type="entry name" value="argH"/>
    <property type="match status" value="1"/>
</dbReference>
<dbReference type="PANTHER" id="PTHR43814">
    <property type="entry name" value="ARGININOSUCCINATE LYASE"/>
    <property type="match status" value="1"/>
</dbReference>
<dbReference type="PANTHER" id="PTHR43814:SF1">
    <property type="entry name" value="ARGININOSUCCINATE LYASE"/>
    <property type="match status" value="1"/>
</dbReference>
<dbReference type="Pfam" id="PF14698">
    <property type="entry name" value="ASL_C2"/>
    <property type="match status" value="1"/>
</dbReference>
<dbReference type="Pfam" id="PF00206">
    <property type="entry name" value="Lyase_1"/>
    <property type="match status" value="1"/>
</dbReference>
<dbReference type="PRINTS" id="PR00145">
    <property type="entry name" value="ARGSUCLYASE"/>
</dbReference>
<dbReference type="PRINTS" id="PR00149">
    <property type="entry name" value="FUMRATELYASE"/>
</dbReference>
<dbReference type="SUPFAM" id="SSF48557">
    <property type="entry name" value="L-aspartase-like"/>
    <property type="match status" value="1"/>
</dbReference>
<dbReference type="PROSITE" id="PS00163">
    <property type="entry name" value="FUMARATE_LYASES"/>
    <property type="match status" value="1"/>
</dbReference>
<name>ARLY_RUTMC</name>
<accession>A1AX52</accession>
<organism>
    <name type="scientific">Ruthia magnifica subsp. Calyptogena magnifica</name>
    <dbReference type="NCBI Taxonomy" id="413404"/>
    <lineage>
        <taxon>Bacteria</taxon>
        <taxon>Pseudomonadati</taxon>
        <taxon>Pseudomonadota</taxon>
        <taxon>Gammaproteobacteria</taxon>
        <taxon>Candidatus Pseudothioglobaceae</taxon>
        <taxon>Candidatus Ruthturnera</taxon>
    </lineage>
</organism>
<comment type="catalytic activity">
    <reaction evidence="1">
        <text>2-(N(omega)-L-arginino)succinate = fumarate + L-arginine</text>
        <dbReference type="Rhea" id="RHEA:24020"/>
        <dbReference type="ChEBI" id="CHEBI:29806"/>
        <dbReference type="ChEBI" id="CHEBI:32682"/>
        <dbReference type="ChEBI" id="CHEBI:57472"/>
        <dbReference type="EC" id="4.3.2.1"/>
    </reaction>
</comment>
<comment type="pathway">
    <text evidence="1">Amino-acid biosynthesis; L-arginine biosynthesis; L-arginine from L-ornithine and carbamoyl phosphate: step 3/3.</text>
</comment>
<comment type="subcellular location">
    <subcellularLocation>
        <location evidence="1">Cytoplasm</location>
    </subcellularLocation>
</comment>
<comment type="similarity">
    <text evidence="1">Belongs to the lyase 1 family. Argininosuccinate lyase subfamily.</text>
</comment>
<feature type="chain" id="PRO_0000321452" description="Argininosuccinate lyase">
    <location>
        <begin position="1"/>
        <end position="480"/>
    </location>
</feature>
<sequence>MTNDTQYKRHKTVLKEESRRTIQINKSWGGRFNEPTDEFVKIFGASIFFDKILAPYDIQGSIAHATMLQEVGLLTENEKNKIIKGLERILSEVKTGEFKWSITLEDIHMNIEARLVKMIGDTGKKLHTGRSRNDQIVTDIRLYLRDQVDDITNEIKRLQLVLADLAEKETNTIMPGFTHLQAAQPISFGHHMMAYFEMLARDVERLFDCRKRINSMPLGSAALAGTTYSIKRTRTAELLGFERICLNSLDGVSDRDFVIEFLSTASIIMMHLSRFSEELILWSSAQFNFIELPDSFCTGSSIMPQKKNPDVPELVRGKTGRVYGNLTSLLTIMKSQPLAYNKDNQEDKEPLFDTVDTLKACLRVFADMIPTIQIKRDNMYNSTKQGYTTATDLADYLVNKGLPFRDAHKVVGKSVAYGIEHQKDLSELSLEELQAFDSRIENDVFEILSLEGSLNARNHLGATSPNQVKQAIKIARKTLK</sequence>
<evidence type="ECO:0000255" key="1">
    <source>
        <dbReference type="HAMAP-Rule" id="MF_00006"/>
    </source>
</evidence>
<proteinExistence type="inferred from homology"/>
<reference key="1">
    <citation type="journal article" date="2007" name="Science">
        <title>The Calyptogena magnifica chemoautotrophic symbiont genome.</title>
        <authorList>
            <person name="Newton I.L.G."/>
            <person name="Woyke T."/>
            <person name="Auchtung T.A."/>
            <person name="Dilly G.F."/>
            <person name="Dutton R.J."/>
            <person name="Fisher M.C."/>
            <person name="Fontanez K.M."/>
            <person name="Lau E."/>
            <person name="Stewart F.J."/>
            <person name="Richardson P.M."/>
            <person name="Barry K.W."/>
            <person name="Saunders E."/>
            <person name="Detter J.C."/>
            <person name="Wu D."/>
            <person name="Eisen J.A."/>
            <person name="Cavanaugh C.M."/>
        </authorList>
    </citation>
    <scope>NUCLEOTIDE SEQUENCE [LARGE SCALE GENOMIC DNA]</scope>
</reference>
<protein>
    <recommendedName>
        <fullName evidence="1">Argininosuccinate lyase</fullName>
        <shortName evidence="1">ASAL</shortName>
        <ecNumber evidence="1">4.3.2.1</ecNumber>
    </recommendedName>
    <alternativeName>
        <fullName evidence="1">Arginosuccinase</fullName>
    </alternativeName>
</protein>